<keyword id="KW-0488">Methylation</keyword>
<keyword id="KW-0687">Ribonucleoprotein</keyword>
<keyword id="KW-0689">Ribosomal protein</keyword>
<keyword id="KW-0694">RNA-binding</keyword>
<keyword id="KW-0699">rRNA-binding</keyword>
<comment type="function">
    <text evidence="1">Forms part of the ribosomal stalk which helps the ribosome interact with GTP-bound translation factors.</text>
</comment>
<comment type="subunit">
    <text evidence="1">Part of the ribosomal stalk of the 50S ribosomal subunit. Interacts with L10 and the large rRNA to form the base of the stalk. L10 forms an elongated spine to which L12 dimers bind in a sequential fashion forming a multimeric L10(L12)X complex.</text>
</comment>
<comment type="PTM">
    <text evidence="1">One or more lysine residues are methylated.</text>
</comment>
<comment type="similarity">
    <text evidence="1">Belongs to the universal ribosomal protein uL11 family.</text>
</comment>
<evidence type="ECO:0000255" key="1">
    <source>
        <dbReference type="HAMAP-Rule" id="MF_00736"/>
    </source>
</evidence>
<evidence type="ECO:0000305" key="2"/>
<organism>
    <name type="scientific">Clostridium botulinum (strain Eklund 17B / Type B)</name>
    <dbReference type="NCBI Taxonomy" id="935198"/>
    <lineage>
        <taxon>Bacteria</taxon>
        <taxon>Bacillati</taxon>
        <taxon>Bacillota</taxon>
        <taxon>Clostridia</taxon>
        <taxon>Eubacteriales</taxon>
        <taxon>Clostridiaceae</taxon>
        <taxon>Clostridium</taxon>
    </lineage>
</organism>
<dbReference type="EMBL" id="CP001056">
    <property type="protein sequence ID" value="ACD23000.1"/>
    <property type="molecule type" value="Genomic_DNA"/>
</dbReference>
<dbReference type="SMR" id="B2TIG4"/>
<dbReference type="KEGG" id="cbk:CLL_A0227"/>
<dbReference type="PATRIC" id="fig|935198.13.peg.201"/>
<dbReference type="HOGENOM" id="CLU_074237_2_1_9"/>
<dbReference type="Proteomes" id="UP000001195">
    <property type="component" value="Chromosome"/>
</dbReference>
<dbReference type="GO" id="GO:0022625">
    <property type="term" value="C:cytosolic large ribosomal subunit"/>
    <property type="evidence" value="ECO:0007669"/>
    <property type="project" value="TreeGrafter"/>
</dbReference>
<dbReference type="GO" id="GO:0070180">
    <property type="term" value="F:large ribosomal subunit rRNA binding"/>
    <property type="evidence" value="ECO:0007669"/>
    <property type="project" value="UniProtKB-UniRule"/>
</dbReference>
<dbReference type="GO" id="GO:0003735">
    <property type="term" value="F:structural constituent of ribosome"/>
    <property type="evidence" value="ECO:0007669"/>
    <property type="project" value="InterPro"/>
</dbReference>
<dbReference type="GO" id="GO:0006412">
    <property type="term" value="P:translation"/>
    <property type="evidence" value="ECO:0007669"/>
    <property type="project" value="UniProtKB-UniRule"/>
</dbReference>
<dbReference type="CDD" id="cd00349">
    <property type="entry name" value="Ribosomal_L11"/>
    <property type="match status" value="1"/>
</dbReference>
<dbReference type="FunFam" id="1.10.10.250:FF:000001">
    <property type="entry name" value="50S ribosomal protein L11"/>
    <property type="match status" value="1"/>
</dbReference>
<dbReference type="FunFam" id="3.30.1550.10:FF:000001">
    <property type="entry name" value="50S ribosomal protein L11"/>
    <property type="match status" value="1"/>
</dbReference>
<dbReference type="Gene3D" id="1.10.10.250">
    <property type="entry name" value="Ribosomal protein L11, C-terminal domain"/>
    <property type="match status" value="1"/>
</dbReference>
<dbReference type="Gene3D" id="3.30.1550.10">
    <property type="entry name" value="Ribosomal protein L11/L12, N-terminal domain"/>
    <property type="match status" value="1"/>
</dbReference>
<dbReference type="HAMAP" id="MF_00736">
    <property type="entry name" value="Ribosomal_uL11"/>
    <property type="match status" value="1"/>
</dbReference>
<dbReference type="InterPro" id="IPR000911">
    <property type="entry name" value="Ribosomal_uL11"/>
</dbReference>
<dbReference type="InterPro" id="IPR006519">
    <property type="entry name" value="Ribosomal_uL11_bac-typ"/>
</dbReference>
<dbReference type="InterPro" id="IPR020783">
    <property type="entry name" value="Ribosomal_uL11_C"/>
</dbReference>
<dbReference type="InterPro" id="IPR036769">
    <property type="entry name" value="Ribosomal_uL11_C_sf"/>
</dbReference>
<dbReference type="InterPro" id="IPR020785">
    <property type="entry name" value="Ribosomal_uL11_CS"/>
</dbReference>
<dbReference type="InterPro" id="IPR020784">
    <property type="entry name" value="Ribosomal_uL11_N"/>
</dbReference>
<dbReference type="InterPro" id="IPR036796">
    <property type="entry name" value="Ribosomal_uL11_N_sf"/>
</dbReference>
<dbReference type="NCBIfam" id="TIGR01632">
    <property type="entry name" value="L11_bact"/>
    <property type="match status" value="1"/>
</dbReference>
<dbReference type="PANTHER" id="PTHR11661">
    <property type="entry name" value="60S RIBOSOMAL PROTEIN L12"/>
    <property type="match status" value="1"/>
</dbReference>
<dbReference type="PANTHER" id="PTHR11661:SF1">
    <property type="entry name" value="LARGE RIBOSOMAL SUBUNIT PROTEIN UL11M"/>
    <property type="match status" value="1"/>
</dbReference>
<dbReference type="Pfam" id="PF00298">
    <property type="entry name" value="Ribosomal_L11"/>
    <property type="match status" value="1"/>
</dbReference>
<dbReference type="Pfam" id="PF03946">
    <property type="entry name" value="Ribosomal_L11_N"/>
    <property type="match status" value="1"/>
</dbReference>
<dbReference type="SMART" id="SM00649">
    <property type="entry name" value="RL11"/>
    <property type="match status" value="1"/>
</dbReference>
<dbReference type="SUPFAM" id="SSF54747">
    <property type="entry name" value="Ribosomal L11/L12e N-terminal domain"/>
    <property type="match status" value="1"/>
</dbReference>
<dbReference type="SUPFAM" id="SSF46906">
    <property type="entry name" value="Ribosomal protein L11, C-terminal domain"/>
    <property type="match status" value="1"/>
</dbReference>
<dbReference type="PROSITE" id="PS00359">
    <property type="entry name" value="RIBOSOMAL_L11"/>
    <property type="match status" value="1"/>
</dbReference>
<accession>B2TIG4</accession>
<proteinExistence type="inferred from homology"/>
<name>RL11_CLOBB</name>
<sequence>MAKKVTGMIKLQLQAGKATPAPPVGPALGQHGVNIMGFCKEFNAKTANQAGLIIPVVITVYQDRSFSFILKTPPAAVLIKKELGLESGSGVPNRTKVGSLTKEQVKKIAETKMPDLNAASIETAMKMIEGTARSMGVTIQE</sequence>
<protein>
    <recommendedName>
        <fullName evidence="1">Large ribosomal subunit protein uL11</fullName>
    </recommendedName>
    <alternativeName>
        <fullName evidence="2">50S ribosomal protein L11</fullName>
    </alternativeName>
</protein>
<gene>
    <name evidence="1" type="primary">rplK</name>
    <name type="ordered locus">CLL_A0227</name>
</gene>
<reference key="1">
    <citation type="submission" date="2008-04" db="EMBL/GenBank/DDBJ databases">
        <title>Complete sequence of Clostridium botulinum strain Eklund.</title>
        <authorList>
            <person name="Brinkac L.M."/>
            <person name="Brown J.L."/>
            <person name="Bruce D."/>
            <person name="Detter C."/>
            <person name="Munk C."/>
            <person name="Smith L.A."/>
            <person name="Smith T.J."/>
            <person name="Sutton G."/>
            <person name="Brettin T.S."/>
        </authorList>
    </citation>
    <scope>NUCLEOTIDE SEQUENCE [LARGE SCALE GENOMIC DNA]</scope>
    <source>
        <strain>Eklund 17B / Type B</strain>
    </source>
</reference>
<feature type="chain" id="PRO_1000195601" description="Large ribosomal subunit protein uL11">
    <location>
        <begin position="1"/>
        <end position="141"/>
    </location>
</feature>